<reference key="1">
    <citation type="journal article" date="2009" name="Proc. Natl. Acad. Sci. U.S.A.">
        <title>The genomic basis of trophic strategy in marine bacteria.</title>
        <authorList>
            <person name="Lauro F.M."/>
            <person name="McDougald D."/>
            <person name="Thomas T."/>
            <person name="Williams T.J."/>
            <person name="Egan S."/>
            <person name="Rice S."/>
            <person name="DeMaere M.Z."/>
            <person name="Ting L."/>
            <person name="Ertan H."/>
            <person name="Johnson J."/>
            <person name="Ferriera S."/>
            <person name="Lapidus A."/>
            <person name="Anderson I."/>
            <person name="Kyrpides N."/>
            <person name="Munk A.C."/>
            <person name="Detter C."/>
            <person name="Han C.S."/>
            <person name="Brown M.V."/>
            <person name="Robb F.T."/>
            <person name="Kjelleberg S."/>
            <person name="Cavicchioli R."/>
        </authorList>
    </citation>
    <scope>NUCLEOTIDE SEQUENCE [LARGE SCALE GENOMIC DNA]</scope>
    <source>
        <strain>DSM 13593 / LMG 18877 / RB2256</strain>
    </source>
</reference>
<name>ACCA_SPHAL</name>
<accession>Q1GS64</accession>
<sequence length="315" mass="34104">MTAFLDFEKQVAALDRQIAELREMGDDPTLDIEGDIARLEDKSAKLLRDIYARLTPWQKTQVARHPDRPHFKHYVAGLFDDWMPLAGDRNFADDQAILGGLARFRGRRVMVIGHEKGDDIPSRMKHNFGMAKPEGYRKAIRLMQLADRFGLPVITLVDTSGAFPGIQAEERGQAEAIARSTEQCLALGVPMVAAVVGEGGSGGAIALAAANRVLMFEHAVYSVISPEGCASILWRTSDKAAEAAAAMKMSAQDLLALKIIDRIVPEPVGGAHRAPEAAIAALGDALEQELNGLSGLPRDTLLAAREEKFLAMGRA</sequence>
<protein>
    <recommendedName>
        <fullName evidence="1">Acetyl-coenzyme A carboxylase carboxyl transferase subunit alpha</fullName>
        <shortName evidence="1">ACCase subunit alpha</shortName>
        <shortName evidence="1">Acetyl-CoA carboxylase carboxyltransferase subunit alpha</shortName>
        <ecNumber evidence="1">2.1.3.15</ecNumber>
    </recommendedName>
</protein>
<organism>
    <name type="scientific">Sphingopyxis alaskensis (strain DSM 13593 / LMG 18877 / RB2256)</name>
    <name type="common">Sphingomonas alaskensis</name>
    <dbReference type="NCBI Taxonomy" id="317655"/>
    <lineage>
        <taxon>Bacteria</taxon>
        <taxon>Pseudomonadati</taxon>
        <taxon>Pseudomonadota</taxon>
        <taxon>Alphaproteobacteria</taxon>
        <taxon>Sphingomonadales</taxon>
        <taxon>Sphingomonadaceae</taxon>
        <taxon>Sphingopyxis</taxon>
    </lineage>
</organism>
<dbReference type="EC" id="2.1.3.15" evidence="1"/>
<dbReference type="EMBL" id="CP000356">
    <property type="protein sequence ID" value="ABF53508.1"/>
    <property type="molecule type" value="Genomic_DNA"/>
</dbReference>
<dbReference type="RefSeq" id="WP_011542086.1">
    <property type="nucleotide sequence ID" value="NC_008048.1"/>
</dbReference>
<dbReference type="SMR" id="Q1GS64"/>
<dbReference type="STRING" id="317655.Sala_1796"/>
<dbReference type="KEGG" id="sal:Sala_1796"/>
<dbReference type="eggNOG" id="COG0825">
    <property type="taxonomic scope" value="Bacteria"/>
</dbReference>
<dbReference type="HOGENOM" id="CLU_015486_0_2_5"/>
<dbReference type="OrthoDB" id="9808023at2"/>
<dbReference type="UniPathway" id="UPA00655">
    <property type="reaction ID" value="UER00711"/>
</dbReference>
<dbReference type="Proteomes" id="UP000006578">
    <property type="component" value="Chromosome"/>
</dbReference>
<dbReference type="GO" id="GO:0009317">
    <property type="term" value="C:acetyl-CoA carboxylase complex"/>
    <property type="evidence" value="ECO:0007669"/>
    <property type="project" value="InterPro"/>
</dbReference>
<dbReference type="GO" id="GO:0003989">
    <property type="term" value="F:acetyl-CoA carboxylase activity"/>
    <property type="evidence" value="ECO:0007669"/>
    <property type="project" value="InterPro"/>
</dbReference>
<dbReference type="GO" id="GO:0005524">
    <property type="term" value="F:ATP binding"/>
    <property type="evidence" value="ECO:0007669"/>
    <property type="project" value="UniProtKB-KW"/>
</dbReference>
<dbReference type="GO" id="GO:0016743">
    <property type="term" value="F:carboxyl- or carbamoyltransferase activity"/>
    <property type="evidence" value="ECO:0007669"/>
    <property type="project" value="UniProtKB-UniRule"/>
</dbReference>
<dbReference type="GO" id="GO:0006633">
    <property type="term" value="P:fatty acid biosynthetic process"/>
    <property type="evidence" value="ECO:0007669"/>
    <property type="project" value="UniProtKB-KW"/>
</dbReference>
<dbReference type="GO" id="GO:2001295">
    <property type="term" value="P:malonyl-CoA biosynthetic process"/>
    <property type="evidence" value="ECO:0007669"/>
    <property type="project" value="UniProtKB-UniRule"/>
</dbReference>
<dbReference type="Gene3D" id="3.90.226.10">
    <property type="entry name" value="2-enoyl-CoA Hydratase, Chain A, domain 1"/>
    <property type="match status" value="1"/>
</dbReference>
<dbReference type="HAMAP" id="MF_00823">
    <property type="entry name" value="AcetylCoA_CT_alpha"/>
    <property type="match status" value="1"/>
</dbReference>
<dbReference type="InterPro" id="IPR001095">
    <property type="entry name" value="Acetyl_CoA_COase_a_su"/>
</dbReference>
<dbReference type="InterPro" id="IPR029045">
    <property type="entry name" value="ClpP/crotonase-like_dom_sf"/>
</dbReference>
<dbReference type="InterPro" id="IPR011763">
    <property type="entry name" value="COA_CT_C"/>
</dbReference>
<dbReference type="NCBIfam" id="TIGR00513">
    <property type="entry name" value="accA"/>
    <property type="match status" value="1"/>
</dbReference>
<dbReference type="NCBIfam" id="NF041504">
    <property type="entry name" value="AccA_sub"/>
    <property type="match status" value="1"/>
</dbReference>
<dbReference type="NCBIfam" id="NF004344">
    <property type="entry name" value="PRK05724.1"/>
    <property type="match status" value="1"/>
</dbReference>
<dbReference type="PANTHER" id="PTHR42853">
    <property type="entry name" value="ACETYL-COENZYME A CARBOXYLASE CARBOXYL TRANSFERASE SUBUNIT ALPHA"/>
    <property type="match status" value="1"/>
</dbReference>
<dbReference type="PANTHER" id="PTHR42853:SF3">
    <property type="entry name" value="ACETYL-COENZYME A CARBOXYLASE CARBOXYL TRANSFERASE SUBUNIT ALPHA, CHLOROPLASTIC"/>
    <property type="match status" value="1"/>
</dbReference>
<dbReference type="Pfam" id="PF03255">
    <property type="entry name" value="ACCA"/>
    <property type="match status" value="1"/>
</dbReference>
<dbReference type="PRINTS" id="PR01069">
    <property type="entry name" value="ACCCTRFRASEA"/>
</dbReference>
<dbReference type="SUPFAM" id="SSF52096">
    <property type="entry name" value="ClpP/crotonase"/>
    <property type="match status" value="1"/>
</dbReference>
<dbReference type="PROSITE" id="PS50989">
    <property type="entry name" value="COA_CT_CTER"/>
    <property type="match status" value="1"/>
</dbReference>
<gene>
    <name evidence="1" type="primary">accA</name>
    <name type="ordered locus">Sala_1796</name>
</gene>
<evidence type="ECO:0000255" key="1">
    <source>
        <dbReference type="HAMAP-Rule" id="MF_00823"/>
    </source>
</evidence>
<evidence type="ECO:0000255" key="2">
    <source>
        <dbReference type="PROSITE-ProRule" id="PRU01137"/>
    </source>
</evidence>
<keyword id="KW-0067">ATP-binding</keyword>
<keyword id="KW-0963">Cytoplasm</keyword>
<keyword id="KW-0275">Fatty acid biosynthesis</keyword>
<keyword id="KW-0276">Fatty acid metabolism</keyword>
<keyword id="KW-0444">Lipid biosynthesis</keyword>
<keyword id="KW-0443">Lipid metabolism</keyword>
<keyword id="KW-0547">Nucleotide-binding</keyword>
<keyword id="KW-1185">Reference proteome</keyword>
<keyword id="KW-0808">Transferase</keyword>
<proteinExistence type="inferred from homology"/>
<comment type="function">
    <text evidence="1">Component of the acetyl coenzyme A carboxylase (ACC) complex. First, biotin carboxylase catalyzes the carboxylation of biotin on its carrier protein (BCCP) and then the CO(2) group is transferred by the carboxyltransferase to acetyl-CoA to form malonyl-CoA.</text>
</comment>
<comment type="catalytic activity">
    <reaction evidence="1">
        <text>N(6)-carboxybiotinyl-L-lysyl-[protein] + acetyl-CoA = N(6)-biotinyl-L-lysyl-[protein] + malonyl-CoA</text>
        <dbReference type="Rhea" id="RHEA:54728"/>
        <dbReference type="Rhea" id="RHEA-COMP:10505"/>
        <dbReference type="Rhea" id="RHEA-COMP:10506"/>
        <dbReference type="ChEBI" id="CHEBI:57288"/>
        <dbReference type="ChEBI" id="CHEBI:57384"/>
        <dbReference type="ChEBI" id="CHEBI:83144"/>
        <dbReference type="ChEBI" id="CHEBI:83145"/>
        <dbReference type="EC" id="2.1.3.15"/>
    </reaction>
</comment>
<comment type="pathway">
    <text evidence="1">Lipid metabolism; malonyl-CoA biosynthesis; malonyl-CoA from acetyl-CoA: step 1/1.</text>
</comment>
<comment type="subunit">
    <text evidence="1">Acetyl-CoA carboxylase is a heterohexamer composed of biotin carboxyl carrier protein (AccB), biotin carboxylase (AccC) and two subunits each of ACCase subunit alpha (AccA) and ACCase subunit beta (AccD).</text>
</comment>
<comment type="subcellular location">
    <subcellularLocation>
        <location evidence="1">Cytoplasm</location>
    </subcellularLocation>
</comment>
<comment type="similarity">
    <text evidence="1">Belongs to the AccA family.</text>
</comment>
<feature type="chain" id="PRO_1000062675" description="Acetyl-coenzyme A carboxylase carboxyl transferase subunit alpha">
    <location>
        <begin position="1"/>
        <end position="315"/>
    </location>
</feature>
<feature type="domain" description="CoA carboxyltransferase C-terminal" evidence="2">
    <location>
        <begin position="39"/>
        <end position="292"/>
    </location>
</feature>